<organism>
    <name type="scientific">Escherichia coli (strain K12)</name>
    <dbReference type="NCBI Taxonomy" id="83333"/>
    <lineage>
        <taxon>Bacteria</taxon>
        <taxon>Pseudomonadati</taxon>
        <taxon>Pseudomonadota</taxon>
        <taxon>Gammaproteobacteria</taxon>
        <taxon>Enterobacterales</taxon>
        <taxon>Enterobacteriaceae</taxon>
        <taxon>Escherichia</taxon>
    </lineage>
</organism>
<dbReference type="EC" id="2.8.1.-"/>
<dbReference type="EMBL" id="U00096">
    <property type="protein sequence ID" value="AAC74055.2"/>
    <property type="molecule type" value="Genomic_DNA"/>
</dbReference>
<dbReference type="EMBL" id="AP009048">
    <property type="protein sequence ID" value="BAA35734.1"/>
    <property type="molecule type" value="Genomic_DNA"/>
</dbReference>
<dbReference type="EMBL" id="X00547">
    <property type="status" value="NOT_ANNOTATED_CDS"/>
    <property type="molecule type" value="Genomic_DNA"/>
</dbReference>
<dbReference type="PIR" id="H64837">
    <property type="entry name" value="H64837"/>
</dbReference>
<dbReference type="RefSeq" id="NP_415489.4">
    <property type="nucleotide sequence ID" value="NC_000913.3"/>
</dbReference>
<dbReference type="RefSeq" id="WP_000904442.1">
    <property type="nucleotide sequence ID" value="NZ_STEB01000006.1"/>
</dbReference>
<dbReference type="SMR" id="P0AB18"/>
<dbReference type="BioGRID" id="4260042">
    <property type="interactions" value="18"/>
</dbReference>
<dbReference type="BioGRID" id="849414">
    <property type="interactions" value="2"/>
</dbReference>
<dbReference type="ComplexPortal" id="CPX-2144">
    <property type="entry name" value="TusBCDE complex"/>
</dbReference>
<dbReference type="ComplexPortal" id="CPX-2145">
    <property type="entry name" value="tRNA-specific 2-thiouridylase tusE-mnmA complex"/>
</dbReference>
<dbReference type="DIP" id="DIP-48154N"/>
<dbReference type="FunCoup" id="P0AB18">
    <property type="interactions" value="93"/>
</dbReference>
<dbReference type="IntAct" id="P0AB18">
    <property type="interactions" value="11"/>
</dbReference>
<dbReference type="STRING" id="511145.b0969"/>
<dbReference type="jPOST" id="P0AB18"/>
<dbReference type="PaxDb" id="511145-b0969"/>
<dbReference type="EnsemblBacteria" id="AAC74055">
    <property type="protein sequence ID" value="AAC74055"/>
    <property type="gene ID" value="b0969"/>
</dbReference>
<dbReference type="GeneID" id="93776445"/>
<dbReference type="GeneID" id="945023"/>
<dbReference type="KEGG" id="ecj:JW0952"/>
<dbReference type="KEGG" id="eco:b0969"/>
<dbReference type="KEGG" id="ecoc:C3026_05920"/>
<dbReference type="PATRIC" id="fig|1411691.4.peg.1304"/>
<dbReference type="EchoBASE" id="EB2714"/>
<dbReference type="eggNOG" id="COG2920">
    <property type="taxonomic scope" value="Bacteria"/>
</dbReference>
<dbReference type="HOGENOM" id="CLU_153199_1_0_6"/>
<dbReference type="InParanoid" id="P0AB18"/>
<dbReference type="OMA" id="LPKPTNC"/>
<dbReference type="OrthoDB" id="9786347at2"/>
<dbReference type="PhylomeDB" id="P0AB18"/>
<dbReference type="BioCyc" id="EcoCyc:EG12876-MONOMER"/>
<dbReference type="BioCyc" id="MetaCyc:EG12876-MONOMER"/>
<dbReference type="PRO" id="PR:P0AB18"/>
<dbReference type="Proteomes" id="UP000000625">
    <property type="component" value="Chromosome"/>
</dbReference>
<dbReference type="GO" id="GO:1990228">
    <property type="term" value="C:sulfurtransferase complex"/>
    <property type="evidence" value="ECO:0000353"/>
    <property type="project" value="ComplexPortal"/>
</dbReference>
<dbReference type="GO" id="GO:0097163">
    <property type="term" value="F:sulfur carrier activity"/>
    <property type="evidence" value="ECO:0000314"/>
    <property type="project" value="EcoCyc"/>
</dbReference>
<dbReference type="GO" id="GO:0016740">
    <property type="term" value="F:transferase activity"/>
    <property type="evidence" value="ECO:0007669"/>
    <property type="project" value="UniProtKB-KW"/>
</dbReference>
<dbReference type="GO" id="GO:0002143">
    <property type="term" value="P:tRNA wobble position uridine thiolation"/>
    <property type="evidence" value="ECO:0000314"/>
    <property type="project" value="ComplexPortal"/>
</dbReference>
<dbReference type="FunFam" id="1.10.10.370:FF:000001">
    <property type="entry name" value="Sulfurtransferase"/>
    <property type="match status" value="1"/>
</dbReference>
<dbReference type="FunFam" id="3.30.1420.10:FF:000001">
    <property type="entry name" value="Sulfurtransferase"/>
    <property type="match status" value="1"/>
</dbReference>
<dbReference type="Gene3D" id="3.30.1420.10">
    <property type="match status" value="1"/>
</dbReference>
<dbReference type="Gene3D" id="1.10.10.370">
    <property type="entry name" value="DsrC-like protein, C-terminal domain"/>
    <property type="match status" value="1"/>
</dbReference>
<dbReference type="InterPro" id="IPR042072">
    <property type="entry name" value="DsrC-like_C"/>
</dbReference>
<dbReference type="InterPro" id="IPR025526">
    <property type="entry name" value="DsrC-like_dom_sf"/>
</dbReference>
<dbReference type="InterPro" id="IPR043163">
    <property type="entry name" value="DsrC-like_N"/>
</dbReference>
<dbReference type="InterPro" id="IPR007453">
    <property type="entry name" value="DsrC/TusE"/>
</dbReference>
<dbReference type="NCBIfam" id="TIGR03342">
    <property type="entry name" value="dsrC_tusE_dsvC"/>
    <property type="match status" value="1"/>
</dbReference>
<dbReference type="NCBIfam" id="NF008562">
    <property type="entry name" value="PRK11508.1"/>
    <property type="match status" value="1"/>
</dbReference>
<dbReference type="PANTHER" id="PTHR37010">
    <property type="entry name" value="SULFURTRANSFERASE TUSE"/>
    <property type="match status" value="1"/>
</dbReference>
<dbReference type="PANTHER" id="PTHR37010:SF1">
    <property type="entry name" value="SULFURTRANSFERASE TUSE"/>
    <property type="match status" value="1"/>
</dbReference>
<dbReference type="Pfam" id="PF04358">
    <property type="entry name" value="DsrC"/>
    <property type="match status" value="1"/>
</dbReference>
<dbReference type="PIRSF" id="PIRSF006223">
    <property type="entry name" value="DsrC_TusE"/>
    <property type="match status" value="1"/>
</dbReference>
<dbReference type="SUPFAM" id="SSF69721">
    <property type="entry name" value="DsrC, the gamma subunit of dissimilatory sulfite reductase"/>
    <property type="match status" value="1"/>
</dbReference>
<feature type="chain" id="PRO_0000168789" description="Sulfurtransferase TusE">
    <location>
        <begin position="1"/>
        <end position="109"/>
    </location>
</feature>
<feature type="active site" description="Cysteine persulfide intermediate">
    <location>
        <position position="108"/>
    </location>
</feature>
<feature type="mutagenesis site" description="Loss of activity." evidence="1">
    <original>C</original>
    <variation>S</variation>
    <location>
        <position position="108"/>
    </location>
</feature>
<keyword id="KW-0963">Cytoplasm</keyword>
<keyword id="KW-1185">Reference proteome</keyword>
<keyword id="KW-0808">Transferase</keyword>
<keyword id="KW-0819">tRNA processing</keyword>
<accession>P0AB18</accession>
<accession>P45572</accession>
<accession>P75878</accession>
<protein>
    <recommendedName>
        <fullName>Sulfurtransferase TusE</fullName>
        <ecNumber>2.8.1.-</ecNumber>
    </recommendedName>
    <alternativeName>
        <fullName>tRNA 2-thiouridine synthesizing protein E</fullName>
    </alternativeName>
</protein>
<reference key="1">
    <citation type="journal article" date="1996" name="DNA Res.">
        <title>A 718-kb DNA sequence of the Escherichia coli K-12 genome corresponding to the 12.7-28.0 min region on the linkage map.</title>
        <authorList>
            <person name="Oshima T."/>
            <person name="Aiba H."/>
            <person name="Baba T."/>
            <person name="Fujita K."/>
            <person name="Hayashi K."/>
            <person name="Honjo A."/>
            <person name="Ikemoto K."/>
            <person name="Inada T."/>
            <person name="Itoh T."/>
            <person name="Kajihara M."/>
            <person name="Kanai K."/>
            <person name="Kashimoto K."/>
            <person name="Kimura S."/>
            <person name="Kitagawa M."/>
            <person name="Makino K."/>
            <person name="Masuda S."/>
            <person name="Miki T."/>
            <person name="Mizobuchi K."/>
            <person name="Mori H."/>
            <person name="Motomura K."/>
            <person name="Nakamura Y."/>
            <person name="Nashimoto H."/>
            <person name="Nishio Y."/>
            <person name="Saito N."/>
            <person name="Sampei G."/>
            <person name="Seki Y."/>
            <person name="Tagami H."/>
            <person name="Takemoto K."/>
            <person name="Wada C."/>
            <person name="Yamamoto Y."/>
            <person name="Yano M."/>
            <person name="Horiuchi T."/>
        </authorList>
    </citation>
    <scope>NUCLEOTIDE SEQUENCE [LARGE SCALE GENOMIC DNA]</scope>
    <source>
        <strain>K12 / W3110 / ATCC 27325 / DSM 5911</strain>
    </source>
</reference>
<reference key="2">
    <citation type="journal article" date="1997" name="Science">
        <title>The complete genome sequence of Escherichia coli K-12.</title>
        <authorList>
            <person name="Blattner F.R."/>
            <person name="Plunkett G. III"/>
            <person name="Bloch C.A."/>
            <person name="Perna N.T."/>
            <person name="Burland V."/>
            <person name="Riley M."/>
            <person name="Collado-Vides J."/>
            <person name="Glasner J.D."/>
            <person name="Rode C.K."/>
            <person name="Mayhew G.F."/>
            <person name="Gregor J."/>
            <person name="Davis N.W."/>
            <person name="Kirkpatrick H.A."/>
            <person name="Goeden M.A."/>
            <person name="Rose D.J."/>
            <person name="Mau B."/>
            <person name="Shao Y."/>
        </authorList>
    </citation>
    <scope>NUCLEOTIDE SEQUENCE [LARGE SCALE GENOMIC DNA]</scope>
    <source>
        <strain>K12 / MG1655 / ATCC 47076</strain>
    </source>
</reference>
<reference key="3">
    <citation type="journal article" date="2006" name="Mol. Syst. Biol.">
        <title>Highly accurate genome sequences of Escherichia coli K-12 strains MG1655 and W3110.</title>
        <authorList>
            <person name="Hayashi K."/>
            <person name="Morooka N."/>
            <person name="Yamamoto Y."/>
            <person name="Fujita K."/>
            <person name="Isono K."/>
            <person name="Choi S."/>
            <person name="Ohtsubo E."/>
            <person name="Baba T."/>
            <person name="Wanner B.L."/>
            <person name="Mori H."/>
            <person name="Horiuchi T."/>
        </authorList>
    </citation>
    <scope>NUCLEOTIDE SEQUENCE [LARGE SCALE GENOMIC DNA]</scope>
    <source>
        <strain>K12 / W3110 / ATCC 27325 / DSM 5911</strain>
    </source>
</reference>
<reference key="4">
    <citation type="journal article" date="1984" name="EMBO J.">
        <title>The E. coli divE mutation, which differentially inhibits synthesis of certain proteins, is in tRNASer1.</title>
        <authorList>
            <person name="Tamura F."/>
            <person name="Nishimura S."/>
            <person name="Ohki M."/>
        </authorList>
    </citation>
    <scope>NUCLEOTIDE SEQUENCE [GENOMIC DNA] OF 1-55</scope>
</reference>
<reference key="5">
    <citation type="journal article" date="1995" name="Nucleic Acids Res.">
        <title>Detection of new genes in a bacterial genome using Markov models for three gene classes.</title>
        <authorList>
            <person name="Borodovsky M."/>
            <person name="McIninch J."/>
            <person name="Koonin E.V."/>
            <person name="Rudd K.E."/>
            <person name="Medigue C."/>
            <person name="Danchin A."/>
        </authorList>
    </citation>
    <scope>IDENTIFICATION</scope>
</reference>
<reference key="6">
    <citation type="journal article" date="2006" name="Mol. Cell">
        <title>Mechanistic insights into sulfur relay by multiple sulfur mediators involved in thiouridine biosynthesis at tRNA wobble positions.</title>
        <authorList>
            <person name="Ikeuchi Y."/>
            <person name="Shigi N."/>
            <person name="Kato J."/>
            <person name="Nishimura A."/>
            <person name="Suzuki T."/>
        </authorList>
    </citation>
    <scope>FUNCTION</scope>
    <scope>MUTAGENESIS OF CYS-108</scope>
    <scope>SUBUNIT</scope>
</reference>
<comment type="function">
    <text evidence="1">Part of a sulfur-relay system required for 2-thiolation of 5-methylaminomethyl-2-thiouridine (mnm(5)s(2)U) at tRNA wobble positions. Could accept sulfur from TusD.</text>
</comment>
<comment type="subunit">
    <text evidence="1">Interacts with the TusBCD complex. Interacts with MnmA.</text>
</comment>
<comment type="subcellular location">
    <subcellularLocation>
        <location evidence="2">Cytoplasm</location>
    </subcellularLocation>
</comment>
<comment type="similarity">
    <text evidence="2">Belongs to the DsrC/TusE family.</text>
</comment>
<comment type="sequence caution" evidence="2">
    <conflict type="frameshift">
        <sequence resource="EMBL" id="X00547"/>
    </conflict>
</comment>
<proteinExistence type="evidence at protein level"/>
<name>TUSE_ECOLI</name>
<evidence type="ECO:0000269" key="1">
    <source>
    </source>
</evidence>
<evidence type="ECO:0000305" key="2"/>
<gene>
    <name type="primary">tusE</name>
    <name type="synonym">yccK</name>
    <name type="ordered locus">b0969</name>
    <name type="ordered locus">JW0952</name>
</gene>
<sequence>MLIFEGKEIETDTEGYLKESSQWSEPLAVVIAENEGISLSPEHWEVVRFVRDFYLEFNTSPAIRMLVKAMANKFGEEKGNSRYLYRLFPKGPAKQATKIAGLPKPVKCI</sequence>